<gene>
    <name evidence="2" type="primary">trmB</name>
    <name type="ordered locus">SPP_0568</name>
</gene>
<organism>
    <name type="scientific">Streptococcus pneumoniae (strain P1031)</name>
    <dbReference type="NCBI Taxonomy" id="488223"/>
    <lineage>
        <taxon>Bacteria</taxon>
        <taxon>Bacillati</taxon>
        <taxon>Bacillota</taxon>
        <taxon>Bacilli</taxon>
        <taxon>Lactobacillales</taxon>
        <taxon>Streptococcaceae</taxon>
        <taxon>Streptococcus</taxon>
    </lineage>
</organism>
<name>TRMB_STRZP</name>
<reference key="1">
    <citation type="journal article" date="2010" name="Genome Biol.">
        <title>Structure and dynamics of the pan-genome of Streptococcus pneumoniae and closely related species.</title>
        <authorList>
            <person name="Donati C."/>
            <person name="Hiller N.L."/>
            <person name="Tettelin H."/>
            <person name="Muzzi A."/>
            <person name="Croucher N.J."/>
            <person name="Angiuoli S.V."/>
            <person name="Oggioni M."/>
            <person name="Dunning Hotopp J.C."/>
            <person name="Hu F.Z."/>
            <person name="Riley D.R."/>
            <person name="Covacci A."/>
            <person name="Mitchell T.J."/>
            <person name="Bentley S.D."/>
            <person name="Kilian M."/>
            <person name="Ehrlich G.D."/>
            <person name="Rappuoli R."/>
            <person name="Moxon E.R."/>
            <person name="Masignani V."/>
        </authorList>
    </citation>
    <scope>NUCLEOTIDE SEQUENCE [LARGE SCALE GENOMIC DNA]</scope>
    <source>
        <strain>P1031</strain>
    </source>
</reference>
<protein>
    <recommendedName>
        <fullName evidence="2">tRNA (guanine-N(7)-)-methyltransferase</fullName>
        <ecNumber evidence="2">2.1.1.33</ecNumber>
    </recommendedName>
    <alternativeName>
        <fullName evidence="2">tRNA (guanine(46)-N(7))-methyltransferase</fullName>
    </alternativeName>
    <alternativeName>
        <fullName evidence="2">tRNA(m7G46)-methyltransferase</fullName>
    </alternativeName>
</protein>
<comment type="function">
    <text evidence="2">Catalyzes the formation of N(7)-methylguanine at position 46 (m7G46) in tRNA.</text>
</comment>
<comment type="catalytic activity">
    <reaction evidence="2">
        <text>guanosine(46) in tRNA + S-adenosyl-L-methionine = N(7)-methylguanosine(46) in tRNA + S-adenosyl-L-homocysteine</text>
        <dbReference type="Rhea" id="RHEA:42708"/>
        <dbReference type="Rhea" id="RHEA-COMP:10188"/>
        <dbReference type="Rhea" id="RHEA-COMP:10189"/>
        <dbReference type="ChEBI" id="CHEBI:57856"/>
        <dbReference type="ChEBI" id="CHEBI:59789"/>
        <dbReference type="ChEBI" id="CHEBI:74269"/>
        <dbReference type="ChEBI" id="CHEBI:74480"/>
        <dbReference type="EC" id="2.1.1.33"/>
    </reaction>
</comment>
<comment type="pathway">
    <text evidence="2">tRNA modification; N(7)-methylguanine-tRNA biosynthesis.</text>
</comment>
<comment type="similarity">
    <text evidence="2">Belongs to the class I-like SAM-binding methyltransferase superfamily. TrmB family.</text>
</comment>
<proteinExistence type="inferred from homology"/>
<sequence length="211" mass="24379">MRVRNRKGATELLEANPQYVVLNPLEAKAKWRDLFGNDNPIHVEVGSGKGAFVSGMAKQNPDINYIGIDIQKSVLSYALDKVLEVGVPNIKLLWVDGSDLTDYFEDGEIDRLYLNFSDPWPKKRHEKRRLTYKTFLDTFKRILPENGEIHFKTDNRGLFEYSLVSFSQYGMKLNGVWLDLHASDFEGNVMTEYEQKFSNKGQVIYRVEAEF</sequence>
<evidence type="ECO:0000250" key="1"/>
<evidence type="ECO:0000255" key="2">
    <source>
        <dbReference type="HAMAP-Rule" id="MF_01057"/>
    </source>
</evidence>
<feature type="chain" id="PRO_1000149669" description="tRNA (guanine-N(7)-)-methyltransferase">
    <location>
        <begin position="1"/>
        <end position="211"/>
    </location>
</feature>
<feature type="region of interest" description="Interaction with RNA" evidence="2">
    <location>
        <begin position="124"/>
        <end position="129"/>
    </location>
</feature>
<feature type="active site" evidence="1">
    <location>
        <position position="118"/>
    </location>
</feature>
<feature type="binding site" evidence="2">
    <location>
        <position position="44"/>
    </location>
    <ligand>
        <name>S-adenosyl-L-methionine</name>
        <dbReference type="ChEBI" id="CHEBI:59789"/>
    </ligand>
</feature>
<feature type="binding site" evidence="2">
    <location>
        <position position="69"/>
    </location>
    <ligand>
        <name>S-adenosyl-L-methionine</name>
        <dbReference type="ChEBI" id="CHEBI:59789"/>
    </ligand>
</feature>
<feature type="binding site" evidence="2">
    <location>
        <position position="96"/>
    </location>
    <ligand>
        <name>S-adenosyl-L-methionine</name>
        <dbReference type="ChEBI" id="CHEBI:59789"/>
    </ligand>
</feature>
<feature type="binding site" evidence="2">
    <location>
        <position position="118"/>
    </location>
    <ligand>
        <name>S-adenosyl-L-methionine</name>
        <dbReference type="ChEBI" id="CHEBI:59789"/>
    </ligand>
</feature>
<feature type="binding site" evidence="2">
    <location>
        <position position="122"/>
    </location>
    <ligand>
        <name>substrate</name>
    </ligand>
</feature>
<feature type="binding site" evidence="2">
    <location>
        <position position="154"/>
    </location>
    <ligand>
        <name>substrate</name>
    </ligand>
</feature>
<feature type="binding site" evidence="2">
    <location>
        <begin position="191"/>
        <end position="194"/>
    </location>
    <ligand>
        <name>substrate</name>
    </ligand>
</feature>
<keyword id="KW-0489">Methyltransferase</keyword>
<keyword id="KW-0949">S-adenosyl-L-methionine</keyword>
<keyword id="KW-0808">Transferase</keyword>
<keyword id="KW-0819">tRNA processing</keyword>
<dbReference type="EC" id="2.1.1.33" evidence="2"/>
<dbReference type="EMBL" id="CP000920">
    <property type="protein sequence ID" value="ACO22033.1"/>
    <property type="molecule type" value="Genomic_DNA"/>
</dbReference>
<dbReference type="RefSeq" id="WP_001266083.1">
    <property type="nucleotide sequence ID" value="NC_012467.1"/>
</dbReference>
<dbReference type="SMR" id="C1CJ34"/>
<dbReference type="GeneID" id="45654031"/>
<dbReference type="KEGG" id="spp:SPP_0568"/>
<dbReference type="HOGENOM" id="CLU_050910_2_1_9"/>
<dbReference type="UniPathway" id="UPA00989"/>
<dbReference type="GO" id="GO:0043527">
    <property type="term" value="C:tRNA methyltransferase complex"/>
    <property type="evidence" value="ECO:0007669"/>
    <property type="project" value="TreeGrafter"/>
</dbReference>
<dbReference type="GO" id="GO:0008176">
    <property type="term" value="F:tRNA (guanine(46)-N7)-methyltransferase activity"/>
    <property type="evidence" value="ECO:0007669"/>
    <property type="project" value="UniProtKB-UniRule"/>
</dbReference>
<dbReference type="CDD" id="cd02440">
    <property type="entry name" value="AdoMet_MTases"/>
    <property type="match status" value="1"/>
</dbReference>
<dbReference type="FunFam" id="3.40.50.150:FF:000035">
    <property type="entry name" value="tRNA (guanine-N(7)-)-methyltransferase"/>
    <property type="match status" value="1"/>
</dbReference>
<dbReference type="Gene3D" id="3.40.50.150">
    <property type="entry name" value="Vaccinia Virus protein VP39"/>
    <property type="match status" value="1"/>
</dbReference>
<dbReference type="HAMAP" id="MF_01057">
    <property type="entry name" value="tRNA_methyltr_TrmB"/>
    <property type="match status" value="1"/>
</dbReference>
<dbReference type="InterPro" id="IPR029063">
    <property type="entry name" value="SAM-dependent_MTases_sf"/>
</dbReference>
<dbReference type="InterPro" id="IPR003358">
    <property type="entry name" value="tRNA_(Gua-N-7)_MeTrfase_Trmb"/>
</dbReference>
<dbReference type="InterPro" id="IPR055361">
    <property type="entry name" value="tRNA_methyltr_TrmB_bact"/>
</dbReference>
<dbReference type="NCBIfam" id="NF001080">
    <property type="entry name" value="PRK00121.2-2"/>
    <property type="match status" value="1"/>
</dbReference>
<dbReference type="NCBIfam" id="TIGR00091">
    <property type="entry name" value="tRNA (guanosine(46)-N7)-methyltransferase TrmB"/>
    <property type="match status" value="1"/>
</dbReference>
<dbReference type="PANTHER" id="PTHR23417">
    <property type="entry name" value="3-DEOXY-D-MANNO-OCTULOSONIC-ACID TRANSFERASE/TRNA GUANINE-N 7 - -METHYLTRANSFERASE"/>
    <property type="match status" value="1"/>
</dbReference>
<dbReference type="PANTHER" id="PTHR23417:SF14">
    <property type="entry name" value="PENTACOTRIPEPTIDE-REPEAT REGION OF PRORP DOMAIN-CONTAINING PROTEIN"/>
    <property type="match status" value="1"/>
</dbReference>
<dbReference type="Pfam" id="PF02390">
    <property type="entry name" value="Methyltransf_4"/>
    <property type="match status" value="1"/>
</dbReference>
<dbReference type="SUPFAM" id="SSF53335">
    <property type="entry name" value="S-adenosyl-L-methionine-dependent methyltransferases"/>
    <property type="match status" value="1"/>
</dbReference>
<dbReference type="PROSITE" id="PS51625">
    <property type="entry name" value="SAM_MT_TRMB"/>
    <property type="match status" value="1"/>
</dbReference>
<accession>C1CJ34</accession>